<feature type="chain" id="PRO_0000117003" description="S-inosyl-L-homocysteine hydrolase">
    <location>
        <begin position="1"/>
        <end position="411"/>
    </location>
</feature>
<feature type="binding site" evidence="1">
    <location>
        <position position="121"/>
    </location>
    <ligand>
        <name>substrate</name>
    </ligand>
</feature>
<feature type="binding site" evidence="1">
    <location>
        <position position="146"/>
    </location>
    <ligand>
        <name>substrate</name>
    </ligand>
</feature>
<feature type="binding site" evidence="1">
    <location>
        <begin position="147"/>
        <end position="149"/>
    </location>
    <ligand>
        <name>NAD(+)</name>
        <dbReference type="ChEBI" id="CHEBI:57540"/>
    </ligand>
</feature>
<feature type="binding site" evidence="1">
    <location>
        <position position="176"/>
    </location>
    <ligand>
        <name>substrate</name>
    </ligand>
</feature>
<feature type="binding site" evidence="1">
    <location>
        <position position="180"/>
    </location>
    <ligand>
        <name>substrate</name>
    </ligand>
</feature>
<feature type="binding site" evidence="1">
    <location>
        <position position="181"/>
    </location>
    <ligand>
        <name>NAD(+)</name>
        <dbReference type="ChEBI" id="CHEBI:57540"/>
    </ligand>
</feature>
<feature type="binding site" evidence="1">
    <location>
        <begin position="210"/>
        <end position="215"/>
    </location>
    <ligand>
        <name>NAD(+)</name>
        <dbReference type="ChEBI" id="CHEBI:57540"/>
    </ligand>
</feature>
<feature type="binding site" evidence="1">
    <location>
        <position position="233"/>
    </location>
    <ligand>
        <name>NAD(+)</name>
        <dbReference type="ChEBI" id="CHEBI:57540"/>
    </ligand>
</feature>
<feature type="binding site" evidence="1">
    <location>
        <position position="268"/>
    </location>
    <ligand>
        <name>NAD(+)</name>
        <dbReference type="ChEBI" id="CHEBI:57540"/>
    </ligand>
</feature>
<feature type="binding site" evidence="1">
    <location>
        <begin position="289"/>
        <end position="291"/>
    </location>
    <ligand>
        <name>NAD(+)</name>
        <dbReference type="ChEBI" id="CHEBI:57540"/>
    </ligand>
</feature>
<feature type="binding site" evidence="1">
    <location>
        <position position="335"/>
    </location>
    <ligand>
        <name>NAD(+)</name>
        <dbReference type="ChEBI" id="CHEBI:57540"/>
    </ligand>
</feature>
<organism>
    <name type="scientific">Methanosarcina acetivorans (strain ATCC 35395 / DSM 2834 / JCM 12185 / C2A)</name>
    <dbReference type="NCBI Taxonomy" id="188937"/>
    <lineage>
        <taxon>Archaea</taxon>
        <taxon>Methanobacteriati</taxon>
        <taxon>Methanobacteriota</taxon>
        <taxon>Stenosarchaea group</taxon>
        <taxon>Methanomicrobia</taxon>
        <taxon>Methanosarcinales</taxon>
        <taxon>Methanosarcinaceae</taxon>
        <taxon>Methanosarcina</taxon>
    </lineage>
</organism>
<comment type="function">
    <text evidence="1">Catalyzes the hydrolysis of S-inosyl-L-homocysteine (SIH) to L-homocysteine (Hcy) and inosine. Likely functions in a S-adenosyl-L-methionine (SAM) recycling pathway from S-adenosyl-L-homocysteine (SAH) produced from SAM-dependent methylation reactions. Can also catalyze the reverse reaction in vitro, i.e. the synthesis of SIH from Hcy and inosine.</text>
</comment>
<comment type="catalytic activity">
    <reaction evidence="1">
        <text>S-inosyl-L-homocysteine + H2O = L-homocysteine + inosine</text>
        <dbReference type="Rhea" id="RHEA:59828"/>
        <dbReference type="ChEBI" id="CHEBI:15377"/>
        <dbReference type="ChEBI" id="CHEBI:17596"/>
        <dbReference type="ChEBI" id="CHEBI:57985"/>
        <dbReference type="ChEBI" id="CHEBI:58199"/>
        <dbReference type="EC" id="3.13.1.9"/>
    </reaction>
    <physiologicalReaction direction="left-to-right" evidence="1">
        <dbReference type="Rhea" id="RHEA:59829"/>
    </physiologicalReaction>
</comment>
<comment type="cofactor">
    <cofactor evidence="1">
        <name>NAD(+)</name>
        <dbReference type="ChEBI" id="CHEBI:57540"/>
    </cofactor>
    <text evidence="1">Binds 1 NAD(+) per subunit.</text>
</comment>
<comment type="pathway">
    <text evidence="1">Amino-acid biosynthesis; S-adenosyl-L-methionine biosynthesis.</text>
</comment>
<comment type="subcellular location">
    <subcellularLocation>
        <location evidence="1">Cytoplasm</location>
    </subcellularLocation>
</comment>
<comment type="miscellaneous">
    <text evidence="1">SAH is a product of SAM methyltransferases and is known to be a feedback inhibitor of these enzymes. As a result of this inhibition, organisms have evolved efficient enzymes to metabolize SAH via different pathways. The pathway found in methanogens differs from the canonical pathway, it uses the deamination of S-adenosyl-L-homocysteine to form S-inosyl-L-homocysteine for the regeneration of SAM from S-adenosyl-L-homocysteine.</text>
</comment>
<comment type="similarity">
    <text evidence="1">Belongs to the adenosylhomocysteinase family.</text>
</comment>
<gene>
    <name evidence="2" type="primary">ahcY2</name>
    <name type="ordered locus">MA_1275</name>
</gene>
<accession>Q8TRA5</accession>
<dbReference type="EC" id="3.13.1.9" evidence="1"/>
<dbReference type="EMBL" id="AE010299">
    <property type="protein sequence ID" value="AAM04694.1"/>
    <property type="molecule type" value="Genomic_DNA"/>
</dbReference>
<dbReference type="RefSeq" id="WP_011021296.1">
    <property type="nucleotide sequence ID" value="NC_003552.1"/>
</dbReference>
<dbReference type="SMR" id="Q8TRA5"/>
<dbReference type="FunCoup" id="Q8TRA5">
    <property type="interactions" value="125"/>
</dbReference>
<dbReference type="STRING" id="188937.MA_1275"/>
<dbReference type="EnsemblBacteria" id="AAM04694">
    <property type="protein sequence ID" value="AAM04694"/>
    <property type="gene ID" value="MA_1275"/>
</dbReference>
<dbReference type="GeneID" id="1473163"/>
<dbReference type="KEGG" id="mac:MA_1275"/>
<dbReference type="HOGENOM" id="CLU_025194_2_1_2"/>
<dbReference type="InParanoid" id="Q8TRA5"/>
<dbReference type="OrthoDB" id="8479at2157"/>
<dbReference type="PhylomeDB" id="Q8TRA5"/>
<dbReference type="UniPathway" id="UPA00315"/>
<dbReference type="Proteomes" id="UP000002487">
    <property type="component" value="Chromosome"/>
</dbReference>
<dbReference type="GO" id="GO:0005829">
    <property type="term" value="C:cytosol"/>
    <property type="evidence" value="ECO:0000318"/>
    <property type="project" value="GO_Central"/>
</dbReference>
<dbReference type="GO" id="GO:0004013">
    <property type="term" value="F:adenosylhomocysteinase activity"/>
    <property type="evidence" value="ECO:0000318"/>
    <property type="project" value="GO_Central"/>
</dbReference>
<dbReference type="GO" id="GO:0016802">
    <property type="term" value="F:trialkylsulfonium hydrolase activity"/>
    <property type="evidence" value="ECO:0007669"/>
    <property type="project" value="UniProtKB-UniRule"/>
</dbReference>
<dbReference type="GO" id="GO:0006730">
    <property type="term" value="P:one-carbon metabolic process"/>
    <property type="evidence" value="ECO:0007669"/>
    <property type="project" value="UniProtKB-KW"/>
</dbReference>
<dbReference type="GO" id="GO:0006556">
    <property type="term" value="P:S-adenosylmethionine biosynthetic process"/>
    <property type="evidence" value="ECO:0007669"/>
    <property type="project" value="UniProtKB-UniRule"/>
</dbReference>
<dbReference type="GO" id="GO:0033353">
    <property type="term" value="P:S-adenosylmethionine cycle"/>
    <property type="evidence" value="ECO:0000318"/>
    <property type="project" value="GO_Central"/>
</dbReference>
<dbReference type="CDD" id="cd00401">
    <property type="entry name" value="SAHH"/>
    <property type="match status" value="1"/>
</dbReference>
<dbReference type="FunFam" id="3.40.50.720:FF:000004">
    <property type="entry name" value="Adenosylhomocysteinase"/>
    <property type="match status" value="1"/>
</dbReference>
<dbReference type="Gene3D" id="3.40.50.1480">
    <property type="entry name" value="Adenosylhomocysteinase-like"/>
    <property type="match status" value="1"/>
</dbReference>
<dbReference type="Gene3D" id="3.40.50.720">
    <property type="entry name" value="NAD(P)-binding Rossmann-like Domain"/>
    <property type="match status" value="1"/>
</dbReference>
<dbReference type="HAMAP" id="MF_00563">
    <property type="entry name" value="AdoHcyase"/>
    <property type="match status" value="1"/>
</dbReference>
<dbReference type="InterPro" id="IPR042172">
    <property type="entry name" value="Adenosylhomocyst_ase-like_sf"/>
</dbReference>
<dbReference type="InterPro" id="IPR000043">
    <property type="entry name" value="Adenosylhomocysteinase-like"/>
</dbReference>
<dbReference type="InterPro" id="IPR015878">
    <property type="entry name" value="Ado_hCys_hydrolase_NAD-bd"/>
</dbReference>
<dbReference type="InterPro" id="IPR036291">
    <property type="entry name" value="NAD(P)-bd_dom_sf"/>
</dbReference>
<dbReference type="InterPro" id="IPR020082">
    <property type="entry name" value="S-Ado-L-homoCys_hydrolase_CS"/>
</dbReference>
<dbReference type="NCBIfam" id="TIGR00936">
    <property type="entry name" value="ahcY"/>
    <property type="match status" value="1"/>
</dbReference>
<dbReference type="NCBIfam" id="NF004005">
    <property type="entry name" value="PRK05476.2-3"/>
    <property type="match status" value="1"/>
</dbReference>
<dbReference type="PANTHER" id="PTHR23420">
    <property type="entry name" value="ADENOSYLHOMOCYSTEINASE"/>
    <property type="match status" value="1"/>
</dbReference>
<dbReference type="PANTHER" id="PTHR23420:SF0">
    <property type="entry name" value="ADENOSYLHOMOCYSTEINASE"/>
    <property type="match status" value="1"/>
</dbReference>
<dbReference type="Pfam" id="PF05221">
    <property type="entry name" value="AdoHcyase"/>
    <property type="match status" value="2"/>
</dbReference>
<dbReference type="Pfam" id="PF00670">
    <property type="entry name" value="AdoHcyase_NAD"/>
    <property type="match status" value="1"/>
</dbReference>
<dbReference type="PIRSF" id="PIRSF001109">
    <property type="entry name" value="Ad_hcy_hydrolase"/>
    <property type="match status" value="1"/>
</dbReference>
<dbReference type="SMART" id="SM00996">
    <property type="entry name" value="AdoHcyase"/>
    <property type="match status" value="1"/>
</dbReference>
<dbReference type="SMART" id="SM00997">
    <property type="entry name" value="AdoHcyase_NAD"/>
    <property type="match status" value="1"/>
</dbReference>
<dbReference type="SUPFAM" id="SSF52283">
    <property type="entry name" value="Formate/glycerate dehydrogenase catalytic domain-like"/>
    <property type="match status" value="1"/>
</dbReference>
<dbReference type="SUPFAM" id="SSF51735">
    <property type="entry name" value="NAD(P)-binding Rossmann-fold domains"/>
    <property type="match status" value="1"/>
</dbReference>
<dbReference type="PROSITE" id="PS00738">
    <property type="entry name" value="ADOHCYASE_1"/>
    <property type="match status" value="1"/>
</dbReference>
<dbReference type="PROSITE" id="PS00739">
    <property type="entry name" value="ADOHCYASE_2"/>
    <property type="match status" value="1"/>
</dbReference>
<keyword id="KW-0963">Cytoplasm</keyword>
<keyword id="KW-0378">Hydrolase</keyword>
<keyword id="KW-0520">NAD</keyword>
<keyword id="KW-0554">One-carbon metabolism</keyword>
<keyword id="KW-1185">Reference proteome</keyword>
<protein>
    <recommendedName>
        <fullName evidence="1">S-inosyl-L-homocysteine hydrolase</fullName>
        <shortName evidence="1">SIHH</shortName>
        <ecNumber evidence="1">3.13.1.9</ecNumber>
    </recommendedName>
</protein>
<evidence type="ECO:0000255" key="1">
    <source>
        <dbReference type="HAMAP-Rule" id="MF_00563"/>
    </source>
</evidence>
<evidence type="ECO:0000312" key="2">
    <source>
        <dbReference type="EMBL" id="AAM04694.1"/>
    </source>
</evidence>
<proteinExistence type="inferred from homology"/>
<sequence>MTEQELVESGNMKMEWARNHMPVIAIIREKFEKEKPLKGLKVGMALHVEAKTAVLVETLAAGGAQVAISGCNPLSTQDDVARALDTRKNISCFARYGCCTSEYYEAIDKVLDIEPDITIDDGADLIFKLHKERTDLLPKILGGCEETTTGVHRLHAMEKEGALKMPVIAVNDAMTKYLFDNRYGTGQSAWDGINRTTNLLVAGKNVVVGGYGWCGRGVAMRAAGLGANVIVTEVDPIRALEARMDGYRVMRMADAARLGEIFVTTTGNRDILTAEHFKVMPDGAVLANSGHFNVEIDMEALTSLAKSVKTVRHNIKEYDIGDRRINVIAEGRLVNLAAGDGHPAEVMDMSFANQALCVRYIAENTLLNGVHGVPRGIDTYVAKLKLESMGISIDELTSKQECYMTGWECGT</sequence>
<reference key="1">
    <citation type="journal article" date="2002" name="Genome Res.">
        <title>The genome of Methanosarcina acetivorans reveals extensive metabolic and physiological diversity.</title>
        <authorList>
            <person name="Galagan J.E."/>
            <person name="Nusbaum C."/>
            <person name="Roy A."/>
            <person name="Endrizzi M.G."/>
            <person name="Macdonald P."/>
            <person name="FitzHugh W."/>
            <person name="Calvo S."/>
            <person name="Engels R."/>
            <person name="Smirnov S."/>
            <person name="Atnoor D."/>
            <person name="Brown A."/>
            <person name="Allen N."/>
            <person name="Naylor J."/>
            <person name="Stange-Thomann N."/>
            <person name="DeArellano K."/>
            <person name="Johnson R."/>
            <person name="Linton L."/>
            <person name="McEwan P."/>
            <person name="McKernan K."/>
            <person name="Talamas J."/>
            <person name="Tirrell A."/>
            <person name="Ye W."/>
            <person name="Zimmer A."/>
            <person name="Barber R.D."/>
            <person name="Cann I."/>
            <person name="Graham D.E."/>
            <person name="Grahame D.A."/>
            <person name="Guss A.M."/>
            <person name="Hedderich R."/>
            <person name="Ingram-Smith C."/>
            <person name="Kuettner H.C."/>
            <person name="Krzycki J.A."/>
            <person name="Leigh J.A."/>
            <person name="Li W."/>
            <person name="Liu J."/>
            <person name="Mukhopadhyay B."/>
            <person name="Reeve J.N."/>
            <person name="Smith K."/>
            <person name="Springer T.A."/>
            <person name="Umayam L.A."/>
            <person name="White O."/>
            <person name="White R.H."/>
            <person name="de Macario E.C."/>
            <person name="Ferry J.G."/>
            <person name="Jarrell K.F."/>
            <person name="Jing H."/>
            <person name="Macario A.J.L."/>
            <person name="Paulsen I.T."/>
            <person name="Pritchett M."/>
            <person name="Sowers K.R."/>
            <person name="Swanson R.V."/>
            <person name="Zinder S.H."/>
            <person name="Lander E."/>
            <person name="Metcalf W.W."/>
            <person name="Birren B."/>
        </authorList>
    </citation>
    <scope>NUCLEOTIDE SEQUENCE [LARGE SCALE GENOMIC DNA]</scope>
    <source>
        <strain>ATCC 35395 / DSM 2834 / JCM 12185 / C2A</strain>
    </source>
</reference>
<name>SIHH_METAC</name>